<keyword id="KW-0025">Alternative splicing</keyword>
<keyword id="KW-0131">Cell cycle</keyword>
<keyword id="KW-0132">Cell division</keyword>
<keyword id="KW-0195">Cyclin</keyword>
<keyword id="KW-1185">Reference proteome</keyword>
<feature type="chain" id="PRO_0000287010" description="Cyclin-B1-3">
    <location>
        <begin position="1"/>
        <end position="470"/>
    </location>
</feature>
<feature type="splice variant" id="VSP_025281" description="In isoform 2." evidence="1">
    <original>G</original>
    <variation>E</variation>
    <location>
        <position position="24"/>
    </location>
</feature>
<feature type="splice variant" id="VSP_025282" description="In isoform 2." evidence="1">
    <location>
        <begin position="25"/>
        <end position="71"/>
    </location>
</feature>
<feature type="sequence conflict" description="In Ref. 6; AK107209." evidence="2" ref="6">
    <original>M</original>
    <variation>T</variation>
    <location>
        <position position="232"/>
    </location>
</feature>
<feature type="sequence conflict" description="In Ref. 6; AK107209." evidence="2" ref="6">
    <original>P</original>
    <variation>A</variation>
    <location>
        <position position="261"/>
    </location>
</feature>
<feature type="sequence conflict" description="In Ref. 6; AK107209." evidence="2" ref="6">
    <original>L</original>
    <variation>Q</variation>
    <location>
        <position position="360"/>
    </location>
</feature>
<feature type="sequence conflict" description="In Ref. 6; AK107209." evidence="2" ref="6">
    <original>E</original>
    <variation>G</variation>
    <location>
        <position position="420"/>
    </location>
</feature>
<comment type="alternative products">
    <event type="alternative splicing"/>
    <isoform>
        <id>Q0JNK6-1</id>
        <name>1</name>
        <sequence type="displayed"/>
    </isoform>
    <isoform>
        <id>Q0JNK6-2</id>
        <name>2</name>
        <sequence type="described" ref="VSP_025281 VSP_025282"/>
    </isoform>
</comment>
<comment type="similarity">
    <text evidence="2">Belongs to the cyclin family. Cyclin AB subfamily.</text>
</comment>
<evidence type="ECO:0000303" key="1">
    <source>
    </source>
</evidence>
<evidence type="ECO:0000305" key="2"/>
<name>CCB13_ORYSJ</name>
<reference key="1">
    <citation type="submission" date="2004-06" db="EMBL/GenBank/DDBJ databases">
        <title>Characterization of a rice (Oryza sativa) cyclinB1 gene Orysa;CYCB1;1.</title>
        <authorList>
            <person name="Zhang C.-L."/>
            <person name="Jiang X.-C."/>
            <person name="Slater A."/>
        </authorList>
    </citation>
    <scope>NUCLEOTIDE SEQUENCE [MRNA] (ISOFORM 1)</scope>
</reference>
<reference key="2">
    <citation type="journal article" date="2002" name="Nature">
        <title>The genome sequence and structure of rice chromosome 1.</title>
        <authorList>
            <person name="Sasaki T."/>
            <person name="Matsumoto T."/>
            <person name="Yamamoto K."/>
            <person name="Sakata K."/>
            <person name="Baba T."/>
            <person name="Katayose Y."/>
            <person name="Wu J."/>
            <person name="Niimura Y."/>
            <person name="Cheng Z."/>
            <person name="Nagamura Y."/>
            <person name="Antonio B.A."/>
            <person name="Kanamori H."/>
            <person name="Hosokawa S."/>
            <person name="Masukawa M."/>
            <person name="Arikawa K."/>
            <person name="Chiden Y."/>
            <person name="Hayashi M."/>
            <person name="Okamoto M."/>
            <person name="Ando T."/>
            <person name="Aoki H."/>
            <person name="Arita K."/>
            <person name="Hamada M."/>
            <person name="Harada C."/>
            <person name="Hijishita S."/>
            <person name="Honda M."/>
            <person name="Ichikawa Y."/>
            <person name="Idonuma A."/>
            <person name="Iijima M."/>
            <person name="Ikeda M."/>
            <person name="Ikeno M."/>
            <person name="Ito S."/>
            <person name="Ito T."/>
            <person name="Ito Y."/>
            <person name="Ito Y."/>
            <person name="Iwabuchi A."/>
            <person name="Kamiya K."/>
            <person name="Karasawa W."/>
            <person name="Katagiri S."/>
            <person name="Kikuta A."/>
            <person name="Kobayashi N."/>
            <person name="Kono I."/>
            <person name="Machita K."/>
            <person name="Maehara T."/>
            <person name="Mizuno H."/>
            <person name="Mizubayashi T."/>
            <person name="Mukai Y."/>
            <person name="Nagasaki H."/>
            <person name="Nakashima M."/>
            <person name="Nakama Y."/>
            <person name="Nakamichi Y."/>
            <person name="Nakamura M."/>
            <person name="Namiki N."/>
            <person name="Negishi M."/>
            <person name="Ohta I."/>
            <person name="Ono N."/>
            <person name="Saji S."/>
            <person name="Sakai K."/>
            <person name="Shibata M."/>
            <person name="Shimokawa T."/>
            <person name="Shomura A."/>
            <person name="Song J."/>
            <person name="Takazaki Y."/>
            <person name="Terasawa K."/>
            <person name="Tsuji K."/>
            <person name="Waki K."/>
            <person name="Yamagata H."/>
            <person name="Yamane H."/>
            <person name="Yoshiki S."/>
            <person name="Yoshihara R."/>
            <person name="Yukawa K."/>
            <person name="Zhong H."/>
            <person name="Iwama H."/>
            <person name="Endo T."/>
            <person name="Ito H."/>
            <person name="Hahn J.H."/>
            <person name="Kim H.-I."/>
            <person name="Eun M.-Y."/>
            <person name="Yano M."/>
            <person name="Jiang J."/>
            <person name="Gojobori T."/>
        </authorList>
    </citation>
    <scope>NUCLEOTIDE SEQUENCE [LARGE SCALE GENOMIC DNA]</scope>
    <source>
        <strain>cv. Nipponbare</strain>
    </source>
</reference>
<reference key="3">
    <citation type="journal article" date="2005" name="Nature">
        <title>The map-based sequence of the rice genome.</title>
        <authorList>
            <consortium name="International rice genome sequencing project (IRGSP)"/>
        </authorList>
    </citation>
    <scope>NUCLEOTIDE SEQUENCE [LARGE SCALE GENOMIC DNA]</scope>
    <source>
        <strain>cv. Nipponbare</strain>
    </source>
</reference>
<reference key="4">
    <citation type="journal article" date="2008" name="Nucleic Acids Res.">
        <title>The rice annotation project database (RAP-DB): 2008 update.</title>
        <authorList>
            <consortium name="The rice annotation project (RAP)"/>
        </authorList>
    </citation>
    <scope>GENOME REANNOTATION</scope>
    <source>
        <strain>cv. Nipponbare</strain>
    </source>
</reference>
<reference key="5">
    <citation type="journal article" date="2013" name="Rice">
        <title>Improvement of the Oryza sativa Nipponbare reference genome using next generation sequence and optical map data.</title>
        <authorList>
            <person name="Kawahara Y."/>
            <person name="de la Bastide M."/>
            <person name="Hamilton J.P."/>
            <person name="Kanamori H."/>
            <person name="McCombie W.R."/>
            <person name="Ouyang S."/>
            <person name="Schwartz D.C."/>
            <person name="Tanaka T."/>
            <person name="Wu J."/>
            <person name="Zhou S."/>
            <person name="Childs K.L."/>
            <person name="Davidson R.M."/>
            <person name="Lin H."/>
            <person name="Quesada-Ocampo L."/>
            <person name="Vaillancourt B."/>
            <person name="Sakai H."/>
            <person name="Lee S.S."/>
            <person name="Kim J."/>
            <person name="Numa H."/>
            <person name="Itoh T."/>
            <person name="Buell C.R."/>
            <person name="Matsumoto T."/>
        </authorList>
    </citation>
    <scope>GENOME REANNOTATION</scope>
    <source>
        <strain>cv. Nipponbare</strain>
    </source>
</reference>
<reference key="6">
    <citation type="journal article" date="2003" name="Science">
        <title>Collection, mapping, and annotation of over 28,000 cDNA clones from japonica rice.</title>
        <authorList>
            <consortium name="The rice full-length cDNA consortium"/>
        </authorList>
    </citation>
    <scope>NUCLEOTIDE SEQUENCE [LARGE SCALE MRNA] (ISOFORM 2)</scope>
    <source>
        <strain>cv. Nipponbare</strain>
    </source>
</reference>
<reference key="7">
    <citation type="journal article" date="2006" name="Mol. Genet. Genomics">
        <title>Genome-wide analysis of cyclin family in rice (Oryza sativa L.).</title>
        <authorList>
            <person name="La H."/>
            <person name="Li J."/>
            <person name="Ji Z."/>
            <person name="Cheng Y."/>
            <person name="Li X."/>
            <person name="Jiang S."/>
            <person name="Venkatesh P.N."/>
            <person name="Ramachandran S."/>
        </authorList>
    </citation>
    <scope>GENE FAMILY</scope>
    <scope>NOMENCLATURE</scope>
</reference>
<protein>
    <recommendedName>
        <fullName>Cyclin-B1-3</fullName>
    </recommendedName>
    <alternativeName>
        <fullName>CYCB1;1</fullName>
    </alternativeName>
    <alternativeName>
        <fullName>G2/mitotic-specific cyclin-B1-3</fullName>
        <shortName>CycB1;3</shortName>
    </alternativeName>
</protein>
<gene>
    <name type="primary">CYCB1-3</name>
    <name type="synonym">CycB1-1</name>
    <name type="ordered locus">Os01g0281200</name>
    <name type="ordered locus">LOC_Os01g17402</name>
    <name type="ORF">B1085F09.20</name>
</gene>
<proteinExistence type="evidence at transcript level"/>
<organism>
    <name type="scientific">Oryza sativa subsp. japonica</name>
    <name type="common">Rice</name>
    <dbReference type="NCBI Taxonomy" id="39947"/>
    <lineage>
        <taxon>Eukaryota</taxon>
        <taxon>Viridiplantae</taxon>
        <taxon>Streptophyta</taxon>
        <taxon>Embryophyta</taxon>
        <taxon>Tracheophyta</taxon>
        <taxon>Spermatophyta</taxon>
        <taxon>Magnoliopsida</taxon>
        <taxon>Liliopsida</taxon>
        <taxon>Poales</taxon>
        <taxon>Poaceae</taxon>
        <taxon>BOP clade</taxon>
        <taxon>Oryzoideae</taxon>
        <taxon>Oryzeae</taxon>
        <taxon>Oryzinae</taxon>
        <taxon>Oryza</taxon>
        <taxon>Oryza sativa</taxon>
    </lineage>
</organism>
<dbReference type="EMBL" id="AY647458">
    <property type="protein sequence ID" value="AAT67242.1"/>
    <property type="molecule type" value="mRNA"/>
</dbReference>
<dbReference type="EMBL" id="AP002804">
    <property type="protein sequence ID" value="BAB00651.1"/>
    <property type="molecule type" value="Genomic_DNA"/>
</dbReference>
<dbReference type="EMBL" id="AP002862">
    <property type="protein sequence ID" value="BAB17747.1"/>
    <property type="molecule type" value="Genomic_DNA"/>
</dbReference>
<dbReference type="EMBL" id="AP003103">
    <property type="protein sequence ID" value="BAD81593.1"/>
    <property type="molecule type" value="Genomic_DNA"/>
</dbReference>
<dbReference type="EMBL" id="AP008207">
    <property type="protein sequence ID" value="BAF04672.2"/>
    <property type="molecule type" value="Genomic_DNA"/>
</dbReference>
<dbReference type="EMBL" id="AP014957">
    <property type="protein sequence ID" value="BAS71599.1"/>
    <property type="molecule type" value="Genomic_DNA"/>
</dbReference>
<dbReference type="EMBL" id="AK107209">
    <property type="status" value="NOT_ANNOTATED_CDS"/>
    <property type="molecule type" value="mRNA"/>
</dbReference>
<dbReference type="RefSeq" id="XP_015643908.1">
    <property type="nucleotide sequence ID" value="XM_015788422.1"/>
</dbReference>
<dbReference type="RefSeq" id="XP_015643917.1">
    <property type="nucleotide sequence ID" value="XM_015788431.1"/>
</dbReference>
<dbReference type="SMR" id="Q0JNK6"/>
<dbReference type="FunCoup" id="Q0JNK6">
    <property type="interactions" value="940"/>
</dbReference>
<dbReference type="STRING" id="39947.Q0JNK6"/>
<dbReference type="PaxDb" id="39947-Q0JNK6"/>
<dbReference type="KEGG" id="dosa:Os01g0281200"/>
<dbReference type="InParanoid" id="Q0JNK6"/>
<dbReference type="OMA" id="IQNFVYM"/>
<dbReference type="OrthoDB" id="5590282at2759"/>
<dbReference type="Proteomes" id="UP000000763">
    <property type="component" value="Chromosome 1"/>
</dbReference>
<dbReference type="Proteomes" id="UP000059680">
    <property type="component" value="Chromosome 1"/>
</dbReference>
<dbReference type="GO" id="GO:0000307">
    <property type="term" value="C:cyclin-dependent protein kinase holoenzyme complex"/>
    <property type="evidence" value="ECO:0000318"/>
    <property type="project" value="GO_Central"/>
</dbReference>
<dbReference type="GO" id="GO:0005737">
    <property type="term" value="C:cytoplasm"/>
    <property type="evidence" value="ECO:0000318"/>
    <property type="project" value="GO_Central"/>
</dbReference>
<dbReference type="GO" id="GO:0005634">
    <property type="term" value="C:nucleus"/>
    <property type="evidence" value="ECO:0000318"/>
    <property type="project" value="GO_Central"/>
</dbReference>
<dbReference type="GO" id="GO:0016538">
    <property type="term" value="F:cyclin-dependent protein serine/threonine kinase regulator activity"/>
    <property type="evidence" value="ECO:0000318"/>
    <property type="project" value="GO_Central"/>
</dbReference>
<dbReference type="GO" id="GO:0051301">
    <property type="term" value="P:cell division"/>
    <property type="evidence" value="ECO:0007669"/>
    <property type="project" value="UniProtKB-KW"/>
</dbReference>
<dbReference type="GO" id="GO:0000082">
    <property type="term" value="P:G1/S transition of mitotic cell cycle"/>
    <property type="evidence" value="ECO:0000318"/>
    <property type="project" value="GO_Central"/>
</dbReference>
<dbReference type="FunFam" id="1.10.472.10:FF:000154">
    <property type="entry name" value="Cyclin-B1-4"/>
    <property type="match status" value="1"/>
</dbReference>
<dbReference type="Gene3D" id="1.10.472.10">
    <property type="entry name" value="Cyclin-like"/>
    <property type="match status" value="2"/>
</dbReference>
<dbReference type="InterPro" id="IPR039361">
    <property type="entry name" value="Cyclin"/>
</dbReference>
<dbReference type="InterPro" id="IPR013763">
    <property type="entry name" value="Cyclin-like_dom"/>
</dbReference>
<dbReference type="InterPro" id="IPR036915">
    <property type="entry name" value="Cyclin-like_sf"/>
</dbReference>
<dbReference type="InterPro" id="IPR046965">
    <property type="entry name" value="Cyclin_A/B-like"/>
</dbReference>
<dbReference type="InterPro" id="IPR004367">
    <property type="entry name" value="Cyclin_C-dom"/>
</dbReference>
<dbReference type="InterPro" id="IPR006671">
    <property type="entry name" value="Cyclin_N"/>
</dbReference>
<dbReference type="PANTHER" id="PTHR10177">
    <property type="entry name" value="CYCLINS"/>
    <property type="match status" value="1"/>
</dbReference>
<dbReference type="Pfam" id="PF02984">
    <property type="entry name" value="Cyclin_C"/>
    <property type="match status" value="1"/>
</dbReference>
<dbReference type="Pfam" id="PF00134">
    <property type="entry name" value="Cyclin_N"/>
    <property type="match status" value="1"/>
</dbReference>
<dbReference type="PIRSF" id="PIRSF001771">
    <property type="entry name" value="Cyclin_A_B_D_E"/>
    <property type="match status" value="1"/>
</dbReference>
<dbReference type="SMART" id="SM00385">
    <property type="entry name" value="CYCLIN"/>
    <property type="match status" value="2"/>
</dbReference>
<dbReference type="SMART" id="SM01332">
    <property type="entry name" value="Cyclin_C"/>
    <property type="match status" value="1"/>
</dbReference>
<dbReference type="SUPFAM" id="SSF47954">
    <property type="entry name" value="Cyclin-like"/>
    <property type="match status" value="2"/>
</dbReference>
<sequence length="470" mass="52887">MASRRQWGAGAGAVDVPAQERKGGKAATDHLLRAFFAVFFVLEGLSWRRRRRRDGEGVFLLRYVACLLCLQAAKIARRPKTTTVVAQQPPRIRRALADVSNLVNGRAALPVVNRQKAAAAAADKCRKPIKQRNENNKAAKPEVIVISSDSEKHKKNPAQRAASRRAPIQTLTSILTKCSRASDGVISPKKELIYDIDASDSHNELAVVDYVEDIYRFYRNTENTYRPLCTYMVSQTEINERMRAILTDWLIEVHYRLMLMPETLYLTVYIIDQYLSLENVPRKELQLVGVSAMLIACKYEETWAPLVKDFLVISDNSFSRQQVLSTEKSILNKLQWNLTVPTMYMFILRYLKAALGDEELEHMTFFYAELALVQYSMLFFAPSVIAAAAVYAARCTLGLSPLWSDLLEYHTGLAEPQLLECARRLVSLHAAAPESRQKVVYKKYASPKLGAVSLHSPAKKLLPPPSPVAA</sequence>
<accession>Q0JNK6</accession>
<accession>Q5NAB3</accession>
<accession>Q9LG64</accession>